<feature type="signal peptide" evidence="1">
    <location>
        <begin position="1"/>
        <end position="19"/>
    </location>
</feature>
<feature type="chain" id="PRO_0000018015" description="17 kDa surface antigen">
    <location>
        <begin position="20"/>
        <end position="154" status="greater than"/>
    </location>
</feature>
<feature type="lipid moiety-binding region" description="N-palmitoyl cysteine" evidence="2">
    <location>
        <position position="20"/>
    </location>
</feature>
<feature type="lipid moiety-binding region" description="S-diacylglycerol cysteine" evidence="2">
    <location>
        <position position="20"/>
    </location>
</feature>
<feature type="non-terminal residue">
    <location>
        <position position="154"/>
    </location>
</feature>
<keyword id="KW-0998">Cell outer membrane</keyword>
<keyword id="KW-0449">Lipoprotein</keyword>
<keyword id="KW-0472">Membrane</keyword>
<keyword id="KW-0564">Palmitate</keyword>
<keyword id="KW-0732">Signal</keyword>
<organism>
    <name type="scientific">Rickettsia australis</name>
    <dbReference type="NCBI Taxonomy" id="787"/>
    <lineage>
        <taxon>Bacteria</taxon>
        <taxon>Pseudomonadati</taxon>
        <taxon>Pseudomonadota</taxon>
        <taxon>Alphaproteobacteria</taxon>
        <taxon>Rickettsiales</taxon>
        <taxon>Rickettsiaceae</taxon>
        <taxon>Rickettsieae</taxon>
        <taxon>Rickettsia</taxon>
        <taxon>spotted fever group</taxon>
    </lineage>
</organism>
<gene>
    <name type="primary">omp</name>
</gene>
<protein>
    <recommendedName>
        <fullName>17 kDa surface antigen</fullName>
    </recommendedName>
</protein>
<dbReference type="EMBL" id="M74042">
    <property type="protein sequence ID" value="AAA26394.1"/>
    <property type="molecule type" value="Genomic_DNA"/>
</dbReference>
<dbReference type="GO" id="GO:0009279">
    <property type="term" value="C:cell outer membrane"/>
    <property type="evidence" value="ECO:0007669"/>
    <property type="project" value="UniProtKB-SubCell"/>
</dbReference>
<dbReference type="InterPro" id="IPR032635">
    <property type="entry name" value="Anti_2"/>
</dbReference>
<dbReference type="InterPro" id="IPR008816">
    <property type="entry name" value="Gly_zipper_2TM_dom"/>
</dbReference>
<dbReference type="InterPro" id="IPR016364">
    <property type="entry name" value="Surface_antigen_Rickettsia"/>
</dbReference>
<dbReference type="Pfam" id="PF16998">
    <property type="entry name" value="17kDa_Anti_2"/>
    <property type="match status" value="1"/>
</dbReference>
<dbReference type="Pfam" id="PF05433">
    <property type="entry name" value="Rick_17kDa_Anti"/>
    <property type="match status" value="1"/>
</dbReference>
<dbReference type="PIRSF" id="PIRSF002721">
    <property type="entry name" value="Surface_antigen_Rickettsia"/>
    <property type="match status" value="1"/>
</dbReference>
<dbReference type="PROSITE" id="PS51257">
    <property type="entry name" value="PROKAR_LIPOPROTEIN"/>
    <property type="match status" value="1"/>
</dbReference>
<evidence type="ECO:0000255" key="1">
    <source>
        <dbReference type="PROSITE-ProRule" id="PRU00303"/>
    </source>
</evidence>
<evidence type="ECO:0000305" key="2"/>
<accession>P50928</accession>
<proteinExistence type="inferred from homology"/>
<sequence length="154" mass="15967">MKLLSKIMIIALAASMLQACNSPGGMNKQGTGTLLGGAGGALLGSQFGKGKGQLVGVGVGALLGAVLGGQIGAGMDEQDRRLAELTSQRALETAPSGSNVEWRNPDNGNYGYVTPNKTYRNSNGQYCREYTQTVVIGGKQQKAYGNACRQPDGQ</sequence>
<comment type="subcellular location">
    <subcellularLocation>
        <location evidence="2">Cell outer membrane</location>
        <topology evidence="2">Lipid-anchor</topology>
    </subcellularLocation>
</comment>
<comment type="similarity">
    <text evidence="2">Belongs to the rickettsiale 17 kDa surface antigen family.</text>
</comment>
<reference key="1">
    <citation type="submission" date="1991-10" db="EMBL/GenBank/DDBJ databases">
        <title>Characterization and comparison of the 17 kilodalton protein of Rickettsia australis.</title>
        <authorList>
            <person name="Baird R.W."/>
            <person name="Ross B."/>
            <person name="Dwyer B."/>
        </authorList>
    </citation>
    <scope>NUCLEOTIDE SEQUENCE [GENOMIC DNA]</scope>
</reference>
<name>17KD_RICAU</name>